<sequence>ASPTSPKVFPLSLDSTPQDGNVVVACLVQGFFPQEPLSVTWSESGQNVTARNFPPSQDASGDLYTTSSQLTLPATQCPDGKSVTCHVKHYTNSSQDVTVPCRVPPPPPCCHPRLSLHRPALEDLLLGSEANLTCTLTGLRDASGATFTWTPSSGKSAVQGPPERDLCGCYSVSSVLPGCAQPWNHGETFTCTAAHPELKTPLTANITKSGNTFRPEVHLLPPPSEELALNELVTLTCLARGFSPKDVLVRWLQGSQELPREKYLTWASRQEPSQGTTTYAVTSILRVAAEDWKKGETFSCMVGHEALPLAFTQKTIDRMAGSCCVADWQMPPPYVVLDLPQETLEEETPGANLWPTTITFLTLFLLSLFYSTALTVTSVRGPSGKREGPQY</sequence>
<organism>
    <name type="scientific">Homo sapiens</name>
    <name type="common">Human</name>
    <dbReference type="NCBI Taxonomy" id="9606"/>
    <lineage>
        <taxon>Eukaryota</taxon>
        <taxon>Metazoa</taxon>
        <taxon>Chordata</taxon>
        <taxon>Craniata</taxon>
        <taxon>Vertebrata</taxon>
        <taxon>Euteleostomi</taxon>
        <taxon>Mammalia</taxon>
        <taxon>Eutheria</taxon>
        <taxon>Euarchontoglires</taxon>
        <taxon>Primates</taxon>
        <taxon>Haplorrhini</taxon>
        <taxon>Catarrhini</taxon>
        <taxon>Hominidae</taxon>
        <taxon>Homo</taxon>
    </lineage>
</organism>
<gene>
    <name evidence="12 17" type="primary">IGHA2</name>
</gene>
<proteinExistence type="evidence at protein level"/>
<feature type="chain" id="PRO_0000153567" description="Immunoglobulin heavy constant alpha 2">
    <location>
        <begin position="1" status="less than"/>
        <end position="391"/>
    </location>
</feature>
<feature type="topological domain" description="Extracellular" evidence="18">
    <location>
        <begin position="1"/>
        <end position="357"/>
    </location>
</feature>
<feature type="transmembrane region" description="Helical" evidence="2">
    <location>
        <begin position="358"/>
        <end position="379"/>
    </location>
</feature>
<feature type="topological domain" description="Cytoplasmic" evidence="18">
    <location>
        <begin position="380"/>
        <end position="391"/>
    </location>
</feature>
<feature type="domain" description="Ig-like 1" evidence="3">
    <location>
        <begin position="6"/>
        <end position="98"/>
    </location>
</feature>
<feature type="domain" description="Ig-like 2" evidence="3">
    <location>
        <begin position="112"/>
        <end position="207"/>
    </location>
</feature>
<feature type="domain" description="Ig-like 3" evidence="3">
    <location>
        <begin position="215"/>
        <end position="317"/>
    </location>
</feature>
<feature type="glycosylation site" description="N-linked (GlcNAc...) asparagine" evidence="7">
    <location>
        <position position="47"/>
    </location>
</feature>
<feature type="glycosylation site" description="N-linked (GlcNAc...) (complex) asparagine" evidence="7 8">
    <location>
        <position position="92"/>
    </location>
</feature>
<feature type="glycosylation site" description="N-linked (GlcNAc...) asparagine" evidence="4 7">
    <location>
        <position position="131"/>
    </location>
</feature>
<feature type="glycosylation site" description="N-linked (GlcNAc...) (complex) asparagine" evidence="4 5 6 7 8">
    <location>
        <position position="205"/>
    </location>
</feature>
<feature type="disulfide bond" evidence="3">
    <location>
        <begin position="26"/>
        <end position="85"/>
    </location>
</feature>
<feature type="disulfide bond" description="Interchain (with light chain)">
    <location>
        <position position="101"/>
    </location>
</feature>
<feature type="disulfide bond" description="Interchain (with heavy chain)">
    <location>
        <position position="109"/>
    </location>
</feature>
<feature type="disulfide bond">
    <location>
        <begin position="110"/>
        <end position="167"/>
    </location>
</feature>
<feature type="disulfide bond" evidence="3">
    <location>
        <begin position="134"/>
        <end position="191"/>
    </location>
</feature>
<feature type="disulfide bond" description="Interchain (with heavy chain)">
    <location>
        <position position="169"/>
    </location>
</feature>
<feature type="disulfide bond" description="Interchain (with heavy chain of another subunit) (or with C-503 of PIGR/the secretory component)" evidence="1 10">
    <location>
        <position position="179"/>
    </location>
</feature>
<feature type="disulfide bond" evidence="3">
    <location>
        <begin position="237"/>
        <end position="300"/>
    </location>
</feature>
<feature type="splice variant" id="VSP_061833" description="In isoform 1.">
    <original>SCCVADWQMPPPYVVLDLPQETLEEETPGANLWPTTITFLTLFLLSLFYSTALTVTSVRGPSGKREGPQ</original>
    <variation>KPTHINVSVVMAEADGTC</variation>
    <location>
        <begin position="322"/>
        <end position="390"/>
    </location>
</feature>
<feature type="sequence variant" id="VAR_003879" description="In IMGT allele IGHA2*01." evidence="9 11">
    <original>S</original>
    <variation>P</variation>
    <location>
        <position position="93"/>
    </location>
</feature>
<feature type="sequence variant" id="VAR_003880" description="In IMGT allele IGHA2*01." evidence="9 11">
    <original>R</original>
    <variation>P</variation>
    <location>
        <position position="102"/>
    </location>
</feature>
<feature type="sequence variant" id="VAR_003881" description="In IMGT allele IGHA2*01." evidence="9 11">
    <original>Y</original>
    <variation>F</variation>
    <location>
        <position position="279"/>
    </location>
</feature>
<feature type="sequence variant" id="VAR_003882" description="In IMGT allele IGHA2*01." evidence="9 11">
    <original>E</original>
    <variation>D</variation>
    <location>
        <position position="296"/>
    </location>
</feature>
<feature type="sequence conflict" description="In Ref. 1; AA sequence, 3; AAB59396 and 2; AA sequence." evidence="18" ref="1 3 2">
    <original>M</original>
    <variation>L</variation>
    <location>
        <position position="319"/>
    </location>
</feature>
<feature type="non-terminal residue">
    <location>
        <position position="1"/>
    </location>
</feature>
<feature type="strand" evidence="23">
    <location>
        <begin position="113"/>
        <end position="116"/>
    </location>
</feature>
<feature type="helix" evidence="23">
    <location>
        <begin position="121"/>
        <end position="125"/>
    </location>
</feature>
<feature type="strand" evidence="23">
    <location>
        <begin position="133"/>
        <end position="137"/>
    </location>
</feature>
<feature type="strand" evidence="23">
    <location>
        <begin position="146"/>
        <end position="151"/>
    </location>
</feature>
<feature type="strand" evidence="23">
    <location>
        <begin position="172"/>
        <end position="175"/>
    </location>
</feature>
<feature type="helix" evidence="23">
    <location>
        <begin position="181"/>
        <end position="185"/>
    </location>
</feature>
<feature type="strand" evidence="23">
    <location>
        <begin position="189"/>
        <end position="194"/>
    </location>
</feature>
<feature type="strand" evidence="24">
    <location>
        <begin position="196"/>
        <end position="200"/>
    </location>
</feature>
<feature type="strand" evidence="23">
    <location>
        <begin position="202"/>
        <end position="206"/>
    </location>
</feature>
<feature type="strand" evidence="23">
    <location>
        <begin position="216"/>
        <end position="220"/>
    </location>
</feature>
<feature type="turn" evidence="23">
    <location>
        <begin position="224"/>
        <end position="228"/>
    </location>
</feature>
<feature type="strand" evidence="23">
    <location>
        <begin position="231"/>
        <end position="244"/>
    </location>
</feature>
<feature type="strand" evidence="23">
    <location>
        <begin position="248"/>
        <end position="253"/>
    </location>
</feature>
<feature type="helix" evidence="23">
    <location>
        <begin position="260"/>
        <end position="262"/>
    </location>
</feature>
<feature type="strand" evidence="22">
    <location>
        <begin position="269"/>
        <end position="271"/>
    </location>
</feature>
<feature type="strand" evidence="23">
    <location>
        <begin position="274"/>
        <end position="276"/>
    </location>
</feature>
<feature type="strand" evidence="23">
    <location>
        <begin position="279"/>
        <end position="288"/>
    </location>
</feature>
<feature type="helix" evidence="23">
    <location>
        <begin position="289"/>
        <end position="294"/>
    </location>
</feature>
<feature type="strand" evidence="23">
    <location>
        <begin position="298"/>
        <end position="303"/>
    </location>
</feature>
<feature type="strand" evidence="23">
    <location>
        <begin position="310"/>
        <end position="316"/>
    </location>
</feature>
<feature type="strand" evidence="23">
    <location>
        <begin position="318"/>
        <end position="321"/>
    </location>
</feature>
<feature type="glycosylation site" description="N-linked (GlcNAc...) (complex) asparagine" evidence="6 7 8">
    <location sequence="P01877-1">
        <position position="327"/>
    </location>
</feature>
<feature type="disulfide bond" description="Interchain (with J chain)">
    <location sequence="P01877-1">
        <position position="339"/>
    </location>
</feature>
<feature type="sequence variant" id="VAR_003883" description="In IMGT allele IGHA2*01." evidence="9 11">
    <original>I</original>
    <variation>V</variation>
    <location sequence="P01877-1">
        <position position="326"/>
    </location>
</feature>
<feature type="sequence variant" id="VAR_003884" description="In IMGT allele IGHA2*01." evidence="9 11">
    <original>A</original>
    <variation>V</variation>
    <location sequence="P01877-1">
        <position position="335"/>
    </location>
</feature>
<name>IGHA2_HUMAN</name>
<accession>P01877</accession>
<accession>A0A075B6N7</accession>
<accession>A0A286YEY5</accession>
<reference key="1">
    <citation type="journal article" date="1978" name="Proc. Natl. Acad. Sci. U.S.A.">
        <title>Complete amino acid sequence of the alpha 2 heavy chain of a human IgA2 immunoglobulin of the A2m (2) allotype.</title>
        <authorList>
            <person name="Torano A."/>
            <person name="Putnam F.W."/>
        </authorList>
    </citation>
    <scope>PROTEIN SEQUENCE</scope>
</reference>
<reference key="2">
    <citation type="journal article" date="1979" name="Proc. Natl. Acad. Sci. U.S.A.">
        <title>Structure of the A2m(1) allotype of human IgA -- a recombinant molecule.</title>
        <authorList>
            <person name="Tsuzukida Y."/>
            <person name="Wang C.-C."/>
            <person name="Putnam F.W."/>
        </authorList>
    </citation>
    <scope>PROTEIN SEQUENCE (IMGT ALLELE IGHA2*01) (ISOFORM 1)</scope>
    <scope>VARIANTS PRO-93; PRO-102; PHE-279 AND ASP-296</scope>
    <scope>VARIANTS VAL-326 AND VAL-335 (ISOFORM 1)</scope>
</reference>
<reference key="3">
    <citation type="journal article" date="1984" name="Cell">
        <title>Mechanisms of divergence and convergence of the human immunoglobulin alpha 1 and alpha 2 constant region gene sequences.</title>
        <authorList>
            <person name="Flanagan J.G."/>
            <person name="Lefranc M.-P."/>
            <person name="Rabbitts T.H."/>
        </authorList>
    </citation>
    <scope>NUCLEOTIDE SEQUENCE [GENOMIC DNA] (IMGT ALLELE IGHA2*01) (ISOFORM 1)</scope>
    <scope>VARIANTS PRO-93; PRO-102; PHE-279 AND ASP-296</scope>
    <scope>VARIANTS VAL-326 AND VAL-335 (ISOFORM 1)</scope>
</reference>
<reference key="4">
    <citation type="journal article" date="2003" name="Nature">
        <title>The DNA sequence and analysis of human chromosome 14.</title>
        <authorList>
            <person name="Heilig R."/>
            <person name="Eckenberg R."/>
            <person name="Petit J.-L."/>
            <person name="Fonknechten N."/>
            <person name="Da Silva C."/>
            <person name="Cattolico L."/>
            <person name="Levy M."/>
            <person name="Barbe V."/>
            <person name="De Berardinis V."/>
            <person name="Ureta-Vidal A."/>
            <person name="Pelletier E."/>
            <person name="Vico V."/>
            <person name="Anthouard V."/>
            <person name="Rowen L."/>
            <person name="Madan A."/>
            <person name="Qin S."/>
            <person name="Sun H."/>
            <person name="Du H."/>
            <person name="Pepin K."/>
            <person name="Artiguenave F."/>
            <person name="Robert C."/>
            <person name="Cruaud C."/>
            <person name="Bruels T."/>
            <person name="Jaillon O."/>
            <person name="Friedlander L."/>
            <person name="Samson G."/>
            <person name="Brottier P."/>
            <person name="Cure S."/>
            <person name="Segurens B."/>
            <person name="Aniere F."/>
            <person name="Samain S."/>
            <person name="Crespeau H."/>
            <person name="Abbasi N."/>
            <person name="Aiach N."/>
            <person name="Boscus D."/>
            <person name="Dickhoff R."/>
            <person name="Dors M."/>
            <person name="Dubois I."/>
            <person name="Friedman C."/>
            <person name="Gouyvenoux M."/>
            <person name="James R."/>
            <person name="Madan A."/>
            <person name="Mairey-Estrada B."/>
            <person name="Mangenot S."/>
            <person name="Martins N."/>
            <person name="Menard M."/>
            <person name="Oztas S."/>
            <person name="Ratcliffe A."/>
            <person name="Shaffer T."/>
            <person name="Trask B."/>
            <person name="Vacherie B."/>
            <person name="Bellemere C."/>
            <person name="Belser C."/>
            <person name="Besnard-Gonnet M."/>
            <person name="Bartol-Mavel D."/>
            <person name="Boutard M."/>
            <person name="Briez-Silla S."/>
            <person name="Combette S."/>
            <person name="Dufosse-Laurent V."/>
            <person name="Ferron C."/>
            <person name="Lechaplais C."/>
            <person name="Louesse C."/>
            <person name="Muselet D."/>
            <person name="Magdelenat G."/>
            <person name="Pateau E."/>
            <person name="Petit E."/>
            <person name="Sirvain-Trukniewicz P."/>
            <person name="Trybou A."/>
            <person name="Vega-Czarny N."/>
            <person name="Bataille E."/>
            <person name="Bluet E."/>
            <person name="Bordelais I."/>
            <person name="Dubois M."/>
            <person name="Dumont C."/>
            <person name="Guerin T."/>
            <person name="Haffray S."/>
            <person name="Hammadi R."/>
            <person name="Muanga J."/>
            <person name="Pellouin V."/>
            <person name="Robert D."/>
            <person name="Wunderle E."/>
            <person name="Gauguet G."/>
            <person name="Roy A."/>
            <person name="Sainte-Marthe L."/>
            <person name="Verdier J."/>
            <person name="Verdier-Discala C."/>
            <person name="Hillier L.W."/>
            <person name="Fulton L."/>
            <person name="McPherson J."/>
            <person name="Matsuda F."/>
            <person name="Wilson R."/>
            <person name="Scarpelli C."/>
            <person name="Gyapay G."/>
            <person name="Wincker P."/>
            <person name="Saurin W."/>
            <person name="Quetier F."/>
            <person name="Waterston R."/>
            <person name="Hood L."/>
            <person name="Weissenbach J."/>
        </authorList>
    </citation>
    <scope>NUCLEOTIDE SEQUENCE [LARGE SCALE GENOMIC DNA] (IMGT ALLELE IGHA2*02)</scope>
</reference>
<reference key="5">
    <citation type="journal article" date="1990" name="Immunogenetics">
        <title>Gene segments encoding membrane domains of the human immunoglobulin gamma 3 and alpha chains.</title>
        <authorList>
            <person name="Bensmana M."/>
            <person name="Lefranc M.P."/>
        </authorList>
    </citation>
    <scope>NUCLEOTIDE SEQUENCE [GENOMIC DNA] OF 321-391 (ISOFORM 2)</scope>
</reference>
<reference key="6">
    <citation type="journal article" date="1990" name="Biochem. J.">
        <title>The structure and function of human IgA.</title>
        <authorList>
            <person name="Kerr M.A."/>
        </authorList>
    </citation>
    <scope>REVIEW ON FUNCTION</scope>
</reference>
<reference key="7">
    <citation type="journal article" date="2001" name="Exp. Clin. Immunogenet.">
        <title>Nomenclature of the human immunoglobulin heavy (IGH) genes.</title>
        <authorList>
            <person name="Lefranc M.P."/>
        </authorList>
    </citation>
    <scope>NOMENCLATURE</scope>
</reference>
<reference key="8">
    <citation type="book" date="2001" name="The Immunoglobulin FactsBook.">
        <title>The Immunoglobulin FactsBook.</title>
        <editorList>
            <person name="Lefranc M.P."/>
            <person name="Lefranc G."/>
        </editorList>
        <authorList>
            <person name="Lefranc M.P."/>
            <person name="Lefranc G."/>
        </authorList>
    </citation>
    <scope>NOMENCLATURE</scope>
</reference>
<reference key="9">
    <citation type="journal article" date="2004" name="Mol. Cell. Proteomics">
        <title>A proteomic analysis of human bile.</title>
        <authorList>
            <person name="Kristiansen T.Z."/>
            <person name="Bunkenborg J."/>
            <person name="Gronborg M."/>
            <person name="Molina H."/>
            <person name="Thuluvath P.J."/>
            <person name="Argani P."/>
            <person name="Goggins M.G."/>
            <person name="Maitra A."/>
            <person name="Pandey A."/>
        </authorList>
    </citation>
    <scope>GLYCOSYLATION [LARGE SCALE ANALYSIS] AT ASN-205</scope>
    <source>
        <tissue>Bile</tissue>
    </source>
</reference>
<reference key="10">
    <citation type="journal article" date="2004" name="Proteomics">
        <title>Screening for N-glycosylated proteins by liquid chromatography mass spectrometry.</title>
        <authorList>
            <person name="Bunkenborg J."/>
            <person name="Pilch B.J."/>
            <person name="Podtelejnikov A.V."/>
            <person name="Wisniewski J.R."/>
        </authorList>
    </citation>
    <scope>GLYCOSYLATION [LARGE SCALE ANALYSIS] AT ASN-131 AND ASN-205</scope>
    <source>
        <tissue>Plasma</tissue>
    </source>
</reference>
<reference key="11">
    <citation type="journal article" date="2006" name="J. Proteome Res.">
        <title>Identification of N-linked glycoproteins in human saliva by glycoprotein capture and mass spectrometry.</title>
        <authorList>
            <person name="Ramachandran P."/>
            <person name="Boontheung P."/>
            <person name="Xie Y."/>
            <person name="Sondej M."/>
            <person name="Wong D.T."/>
            <person name="Loo J.A."/>
        </authorList>
    </citation>
    <scope>GLYCOSYLATION [LARGE SCALE ANALYSIS] AT ASN-205</scope>
    <scope>GLYCOSYLATION AT ASN-327 (ISOFORM 1)</scope>
    <source>
        <tissue>Saliva</tissue>
    </source>
</reference>
<reference key="12">
    <citation type="journal article" date="2007" name="Annu. Rev. Genet.">
        <title>Immunoglobulin somatic hypermutation.</title>
        <authorList>
            <person name="Teng G."/>
            <person name="Papavasiliou F.N."/>
        </authorList>
    </citation>
    <scope>REVIEW ON SOMATIC HYPERMUTATION</scope>
</reference>
<reference key="13">
    <citation type="journal article" date="2008" name="Proteomics">
        <title>Identification of N-linked glycoproteins in human milk by hydrophilic interaction liquid chromatography and mass spectrometry.</title>
        <authorList>
            <person name="Picariello G."/>
            <person name="Ferranti P."/>
            <person name="Mamone G."/>
            <person name="Roepstorff P."/>
            <person name="Addeo F."/>
        </authorList>
    </citation>
    <scope>GLYCOSYLATION [LARGE SCALE ANALYSIS] AT ASN-47; ASN-92; ASN-131 AND ASN-205</scope>
    <scope>GLYCOSYLATION AT ASN-327 (ISOFORM 1)</scope>
    <source>
        <tissue>Milk</tissue>
    </source>
</reference>
<reference key="14">
    <citation type="journal article" date="2009" name="Mol. Cell. Proteomics">
        <title>A strategy for precise and large scale identification of core fucosylated glycoproteins.</title>
        <authorList>
            <person name="Jia W."/>
            <person name="Lu Z."/>
            <person name="Fu Y."/>
            <person name="Wang H.P."/>
            <person name="Wang L.H."/>
            <person name="Chi H."/>
            <person name="Yuan Z.F."/>
            <person name="Zheng Z.B."/>
            <person name="Song L.N."/>
            <person name="Han H.H."/>
            <person name="Liang Y.M."/>
            <person name="Wang J.L."/>
            <person name="Cai Y."/>
            <person name="Zhang Y.K."/>
            <person name="Deng Y.L."/>
            <person name="Ying W.T."/>
            <person name="He S.M."/>
            <person name="Qian X.H."/>
        </authorList>
    </citation>
    <scope>GLYCOSYLATION AT ASN-92 AND ASN-205</scope>
    <scope>GLYCOSYLATION AT ASN-327 (ISOFORM 1)</scope>
</reference>
<reference key="15">
    <citation type="submission" date="2009-07" db="UniProtKB">
        <authorList>
            <person name="Kolarich D."/>
        </authorList>
    </citation>
    <scope>LACK OF GLYCOSYLATION AT ASN-92</scope>
</reference>
<reference key="16">
    <citation type="journal article" date="2010" name="J. Allergy Clin. Immunol.">
        <title>Structure and function of immunoglobulins.</title>
        <authorList>
            <person name="Schroeder H.W. Jr."/>
            <person name="Cavacini L."/>
        </authorList>
    </citation>
    <scope>REVIEW ON IMMUNOGLOBULINS</scope>
</reference>
<reference key="17">
    <citation type="journal article" date="2012" name="Nat. Rev. Immunol.">
        <title>Molecular programming of B cell memory.</title>
        <authorList>
            <person name="McHeyzer-Williams M."/>
            <person name="Okitsu S."/>
            <person name="Wang N."/>
            <person name="McHeyzer-Williams L."/>
        </authorList>
    </citation>
    <scope>REVIEW ON FUNCTION</scope>
</reference>
<reference key="18">
    <citation type="journal article" date="2020" name="Science">
        <title>Structure of the secretory immunoglobulin A core.</title>
        <authorList>
            <person name="Kumar N."/>
            <person name="Arthur C.P."/>
            <person name="Ciferri C."/>
            <person name="Matsumoto M.L."/>
        </authorList>
    </citation>
    <scope>STRUCTURE BY ELECTRON MICROSCOPY (2.90 ANGSTROMS) OF 110-340 IN COMPLEX WITH PIGR AND JCHAIN</scope>
    <scope>DISULFIDE BOND</scope>
    <scope>SUBUNIT</scope>
</reference>
<comment type="function">
    <text evidence="13 14 15 16">Constant region of immunoglobulin heavy chains. Immunoglobulins, also known as antibodies, are membrane-bound or secreted glycoproteins produced by B lymphocytes. In the recognition phase of humoral immunity, the membrane-bound immunoglobulins serve as receptors which, upon binding of a specific antigen, trigger the clonal expansion and differentiation of B lymphocytes into immunoglobulins-secreting plasma cells. Secreted immunoglobulins mediate the effector phase of humoral immunity, which results in the elimination of bound antigens (PubMed:20176268, PubMed:22158414). The antigen binding site is formed by the variable domain of one heavy chain, together with that of its associated light chain. Thus, each immunoglobulin has two antigen binding sites with remarkable affinity for a particular antigen. The variable domains are assembled by a process called V-(D)-J rearrangement and can then be subjected to somatic hypermutations which, after exposure to antigen and selection, allow affinity maturation for a particular antigen (PubMed:17576170, PubMed:20176268). Ig alpha is the major immunoglobulin class in body secretions (PubMed:2241915).</text>
</comment>
<comment type="subunit">
    <text evidence="10 14 16">Immunoglobulins are composed of two identical heavy chains and two identical light chains; disulfide-linked (PubMed:20176268). Monomeric or polymeric (PubMed:2241915). Part of the secretory IgA (sIgA) complex that consists of two, four or five IgA monomers, and two additional non-Ig polypeptides, namely the JCHAIN and the secretory component (the proteolytic product of PIGR).</text>
</comment>
<comment type="subcellular location">
    <molecule>Isoform 1</molecule>
    <subcellularLocation>
        <location evidence="14 15">Secreted</location>
    </subcellularLocation>
</comment>
<comment type="subcellular location">
    <subcellularLocation>
        <location evidence="14 15">Cell membrane</location>
        <topology evidence="2">Single-pass type I membrane protein</topology>
    </subcellularLocation>
</comment>
<comment type="alternative products">
    <event type="alternative splicing"/>
    <isoform>
        <id>P01877-2</id>
        <name>2</name>
        <name>Membrane-bound</name>
        <name>mIgA2</name>
        <sequence type="displayed"/>
    </isoform>
    <isoform>
        <id>P01877-1</id>
        <name>1</name>
        <name>Secreted</name>
        <name>sIgA2</name>
        <sequence type="described" ref="VSP_061833"/>
    </isoform>
</comment>
<comment type="polymorphism">
    <text evidence="18">There are several alleles. The sequence shown is that of IMGT allele IGHA2*02.</text>
</comment>
<comment type="caution">
    <text evidence="21">N-glycosylation was reported in milk on the non-canonical Asn-92 site (PubMed:18780401). However, according to Ref.15, N-glycosylation from the same tissue was found to be absent at this site.</text>
</comment>
<comment type="caution">
    <text evidence="18">For an example of a full-length immunoglobulin alpha heavy chain see AC P0DOX2.</text>
</comment>
<comment type="sequence caution" evidence="18">
    <conflict type="erroneous initiation">
        <sequence resource="EMBL-CDS" id="AAB59396"/>
    </conflict>
    <text>Truncated N-terminus.</text>
</comment>
<protein>
    <recommendedName>
        <fullName evidence="12 17">Immunoglobulin heavy constant alpha 2</fullName>
    </recommendedName>
    <alternativeName>
        <fullName evidence="18">Ig alpha-2 chain C region</fullName>
    </alternativeName>
    <alternativeName>
        <fullName evidence="20">Ig alpha-2 chain C region BUT</fullName>
    </alternativeName>
    <alternativeName>
        <fullName evidence="19">Ig alpha-2 chain C region LAN</fullName>
    </alternativeName>
</protein>
<dbReference type="EMBL" id="J00221">
    <property type="protein sequence ID" value="AAB59396.1"/>
    <property type="status" value="ALT_INIT"/>
    <property type="molecule type" value="Genomic_DNA"/>
</dbReference>
<dbReference type="EMBL" id="AL928742">
    <property type="status" value="NOT_ANNOTATED_CDS"/>
    <property type="molecule type" value="Genomic_DNA"/>
</dbReference>
<dbReference type="PIR" id="B22360">
    <property type="entry name" value="B22360"/>
</dbReference>
<dbReference type="PDB" id="3CM9">
    <property type="method" value="X-ray"/>
    <property type="chains" value="A/B/C/D=2-340"/>
</dbReference>
<dbReference type="PDB" id="6UE8">
    <property type="method" value="EM"/>
    <property type="resolution" value="3.00 A"/>
    <property type="chains" value="A/B/E/F/G/H/K/L=110-340"/>
</dbReference>
<dbReference type="PDB" id="6UE9">
    <property type="method" value="EM"/>
    <property type="resolution" value="2.90 A"/>
    <property type="chains" value="A/B/E/F/G/H/K/L=110-340"/>
</dbReference>
<dbReference type="PDB" id="6UEA">
    <property type="method" value="EM"/>
    <property type="resolution" value="3.00 A"/>
    <property type="chains" value="A/B/E/F/G/H/I/J/K/L=110-340"/>
</dbReference>
<dbReference type="PDBsum" id="3CM9"/>
<dbReference type="PDBsum" id="6UE8"/>
<dbReference type="PDBsum" id="6UE9"/>
<dbReference type="PDBsum" id="6UEA"/>
<dbReference type="EMDB" id="EMD-20750"/>
<dbReference type="EMDB" id="EMD-20751"/>
<dbReference type="EMDB" id="EMD-20752"/>
<dbReference type="SMR" id="P01877"/>
<dbReference type="ComplexPortal" id="CPX-6962">
    <property type="entry name" value="IgA2 - Ig kappa immunoglobulin complex, constant regions"/>
</dbReference>
<dbReference type="ComplexPortal" id="CPX-6963">
    <property type="entry name" value="IgA2 - Ig lambda 1 immunoglobulin complex, constant regions"/>
</dbReference>
<dbReference type="ComplexPortal" id="CPX-6964">
    <property type="entry name" value="IgA2 - Ig lambda 2 immunoglobulin complex, constant regions"/>
</dbReference>
<dbReference type="ComplexPortal" id="CPX-6965">
    <property type="entry name" value="IgA2 - Ig lambda 3 immunoglobulin complex, constant regions"/>
</dbReference>
<dbReference type="ComplexPortal" id="CPX-6966">
    <property type="entry name" value="IgA2 - Ig lambda 6 immunoglobulin complex, constant regions"/>
</dbReference>
<dbReference type="ComplexPortal" id="CPX-6967">
    <property type="entry name" value="IgA2 - Ig lambda 7 immunoglobulin complex, constant regions"/>
</dbReference>
<dbReference type="FunCoup" id="P01877">
    <property type="interactions" value="223"/>
</dbReference>
<dbReference type="IntAct" id="P01877">
    <property type="interactions" value="94"/>
</dbReference>
<dbReference type="DrugBank" id="DB04676">
    <property type="generic name" value="Dansyllysine"/>
</dbReference>
<dbReference type="IMGT_GENE-DB" id="IGHA2"/>
<dbReference type="GlyConnect" id="227">
    <property type="glycosylation" value="58 N-Linked glycans (1 site), 1 O-Linked glycan"/>
</dbReference>
<dbReference type="GlyConnect" id="2967">
    <property type="glycosylation" value="37 N-Linked glycans"/>
</dbReference>
<dbReference type="GlyConnect" id="647">
    <property type="glycosylation" value="118 N-Linked glycans (5 sites)"/>
</dbReference>
<dbReference type="GlyCosmos" id="P01877">
    <property type="glycosylation" value="6 sites, 167 glycans"/>
</dbReference>
<dbReference type="GlyGen" id="P01877">
    <property type="glycosylation" value="5 sites, 117 N-linked glycans (5 sites), 2 O-linked glycans (1 site)"/>
</dbReference>
<dbReference type="iPTMnet" id="P01877"/>
<dbReference type="PhosphoSitePlus" id="P01877"/>
<dbReference type="BioMuta" id="IGHA2"/>
<dbReference type="DMDM" id="218512088"/>
<dbReference type="CPTAC" id="CPTAC-674"/>
<dbReference type="jPOST" id="P01877"/>
<dbReference type="MassIVE" id="P01877"/>
<dbReference type="PRIDE" id="P01877"/>
<dbReference type="ProteomicsDB" id="51501"/>
<dbReference type="Pumba" id="P01877"/>
<dbReference type="Ensembl" id="ENST00000390539.2">
    <molecule id="P01877-1"/>
    <property type="protein sequence ID" value="ENSP00000374981.2"/>
    <property type="gene ID" value="ENSG00000211890.4"/>
</dbReference>
<dbReference type="Ensembl" id="ENST00000497872.4">
    <molecule id="P01877-2"/>
    <property type="protein sequence ID" value="ENSP00000493086.1"/>
    <property type="gene ID" value="ENSG00000211890.4"/>
</dbReference>
<dbReference type="AGR" id="HGNC:5479"/>
<dbReference type="GeneCards" id="IGHA2"/>
<dbReference type="HGNC" id="HGNC:5479">
    <property type="gene designation" value="IGHA2"/>
</dbReference>
<dbReference type="HPA" id="ENSG00000211890">
    <property type="expression patterns" value="Tissue enriched (intestine)"/>
</dbReference>
<dbReference type="MalaCards" id="IGHA2"/>
<dbReference type="MIM" id="147000">
    <property type="type" value="gene"/>
</dbReference>
<dbReference type="neXtProt" id="NX_P01877"/>
<dbReference type="OpenTargets" id="ENSG00000211890"/>
<dbReference type="VEuPathDB" id="HostDB:ENSG00000211890"/>
<dbReference type="GeneTree" id="ENSGT00940000161516"/>
<dbReference type="InParanoid" id="P01877"/>
<dbReference type="OMA" id="QCHVEHY"/>
<dbReference type="OrthoDB" id="9944186at2759"/>
<dbReference type="PAN-GO" id="P01877">
    <property type="GO annotations" value="10 GO annotations based on evolutionary models"/>
</dbReference>
<dbReference type="PhylomeDB" id="P01877"/>
<dbReference type="PathwayCommons" id="P01877"/>
<dbReference type="Reactome" id="R-HSA-202733">
    <property type="pathway name" value="Cell surface interactions at the vascular wall"/>
</dbReference>
<dbReference type="Reactome" id="R-HSA-2168880">
    <property type="pathway name" value="Scavenging of heme from plasma"/>
</dbReference>
<dbReference type="SignaLink" id="P01877"/>
<dbReference type="ChiTaRS" id="IGHA2">
    <property type="organism name" value="human"/>
</dbReference>
<dbReference type="Pharos" id="P01877">
    <property type="development level" value="Tbio"/>
</dbReference>
<dbReference type="PRO" id="PR:P01877"/>
<dbReference type="Proteomes" id="UP000005640">
    <property type="component" value="Chromosome 14"/>
</dbReference>
<dbReference type="RNAct" id="P01877">
    <property type="molecule type" value="protein"/>
</dbReference>
<dbReference type="Bgee" id="ENSG00000211890">
    <property type="expression patterns" value="Expressed in mucosa of transverse colon and 87 other cell types or tissues"/>
</dbReference>
<dbReference type="ExpressionAtlas" id="P01877">
    <property type="expression patterns" value="baseline and differential"/>
</dbReference>
<dbReference type="GO" id="GO:0072562">
    <property type="term" value="C:blood microparticle"/>
    <property type="evidence" value="ECO:0007005"/>
    <property type="project" value="UniProtKB"/>
</dbReference>
<dbReference type="GO" id="GO:0070062">
    <property type="term" value="C:extracellular exosome"/>
    <property type="evidence" value="ECO:0007005"/>
    <property type="project" value="UniProtKB"/>
</dbReference>
<dbReference type="GO" id="GO:0005576">
    <property type="term" value="C:extracellular region"/>
    <property type="evidence" value="ECO:0000304"/>
    <property type="project" value="Reactome"/>
</dbReference>
<dbReference type="GO" id="GO:0005615">
    <property type="term" value="C:extracellular space"/>
    <property type="evidence" value="ECO:0000314"/>
    <property type="project" value="UniProtKB"/>
</dbReference>
<dbReference type="GO" id="GO:0071745">
    <property type="term" value="C:IgA immunoglobulin complex"/>
    <property type="evidence" value="ECO:0000303"/>
    <property type="project" value="ComplexPortal"/>
</dbReference>
<dbReference type="GO" id="GO:0042571">
    <property type="term" value="C:immunoglobulin complex, circulating"/>
    <property type="evidence" value="ECO:0000318"/>
    <property type="project" value="GO_Central"/>
</dbReference>
<dbReference type="GO" id="GO:0071748">
    <property type="term" value="C:monomeric IgA immunoglobulin complex"/>
    <property type="evidence" value="ECO:0000314"/>
    <property type="project" value="UniProtKB"/>
</dbReference>
<dbReference type="GO" id="GO:0005886">
    <property type="term" value="C:plasma membrane"/>
    <property type="evidence" value="ECO:0000303"/>
    <property type="project" value="ComplexPortal"/>
</dbReference>
<dbReference type="GO" id="GO:0071752">
    <property type="term" value="C:secretory dimeric IgA immunoglobulin complex"/>
    <property type="evidence" value="ECO:0000314"/>
    <property type="project" value="UniProtKB"/>
</dbReference>
<dbReference type="GO" id="GO:0071751">
    <property type="term" value="C:secretory IgA immunoglobulin complex"/>
    <property type="evidence" value="ECO:0000314"/>
    <property type="project" value="UniProtKB"/>
</dbReference>
<dbReference type="GO" id="GO:0003823">
    <property type="term" value="F:antigen binding"/>
    <property type="evidence" value="ECO:0000318"/>
    <property type="project" value="GO_Central"/>
</dbReference>
<dbReference type="GO" id="GO:0002250">
    <property type="term" value="P:adaptive immune response"/>
    <property type="evidence" value="ECO:0000303"/>
    <property type="project" value="ComplexPortal"/>
</dbReference>
<dbReference type="GO" id="GO:0019731">
    <property type="term" value="P:antibacterial humoral response"/>
    <property type="evidence" value="ECO:0000314"/>
    <property type="project" value="UniProtKB"/>
</dbReference>
<dbReference type="GO" id="GO:0050853">
    <property type="term" value="P:B cell receptor signaling pathway"/>
    <property type="evidence" value="ECO:0000303"/>
    <property type="project" value="ComplexPortal"/>
</dbReference>
<dbReference type="GO" id="GO:0006958">
    <property type="term" value="P:complement activation, classical pathway"/>
    <property type="evidence" value="ECO:0000318"/>
    <property type="project" value="GO_Central"/>
</dbReference>
<dbReference type="GO" id="GO:0003094">
    <property type="term" value="P:glomerular filtration"/>
    <property type="evidence" value="ECO:0000315"/>
    <property type="project" value="UniProtKB"/>
</dbReference>
<dbReference type="GO" id="GO:0006955">
    <property type="term" value="P:immune response"/>
    <property type="evidence" value="ECO:0000303"/>
    <property type="project" value="UniProtKB"/>
</dbReference>
<dbReference type="GO" id="GO:0060267">
    <property type="term" value="P:positive regulation of respiratory burst"/>
    <property type="evidence" value="ECO:0000314"/>
    <property type="project" value="UniProtKB"/>
</dbReference>
<dbReference type="CDD" id="cd04986">
    <property type="entry name" value="IgC1_CH2_IgA"/>
    <property type="match status" value="1"/>
</dbReference>
<dbReference type="CDD" id="cd05768">
    <property type="entry name" value="IgC1_CH3_IgAGD_CH4_IgAEM"/>
    <property type="match status" value="1"/>
</dbReference>
<dbReference type="FunFam" id="2.60.40.10:FF:002016">
    <property type="entry name" value="Immunoglobulin heavy constant alpha 2"/>
    <property type="match status" value="1"/>
</dbReference>
<dbReference type="FunFam" id="2.60.40.10:FF:000998">
    <property type="entry name" value="Immunoglobulin heavy constant epsilon"/>
    <property type="match status" value="1"/>
</dbReference>
<dbReference type="FunFam" id="2.60.40.10:FF:000463">
    <property type="entry name" value="Immunoglobulin heavy constant gamma 1"/>
    <property type="match status" value="1"/>
</dbReference>
<dbReference type="Gene3D" id="2.60.40.10">
    <property type="entry name" value="Immunoglobulins"/>
    <property type="match status" value="3"/>
</dbReference>
<dbReference type="InterPro" id="IPR007110">
    <property type="entry name" value="Ig-like_dom"/>
</dbReference>
<dbReference type="InterPro" id="IPR036179">
    <property type="entry name" value="Ig-like_dom_sf"/>
</dbReference>
<dbReference type="InterPro" id="IPR013783">
    <property type="entry name" value="Ig-like_fold"/>
</dbReference>
<dbReference type="InterPro" id="IPR003006">
    <property type="entry name" value="Ig/MHC_CS"/>
</dbReference>
<dbReference type="InterPro" id="IPR003597">
    <property type="entry name" value="Ig_C1-set"/>
</dbReference>
<dbReference type="InterPro" id="IPR050380">
    <property type="entry name" value="Immune_Resp_Modulators"/>
</dbReference>
<dbReference type="InterPro" id="IPR013151">
    <property type="entry name" value="Immunoglobulin_dom"/>
</dbReference>
<dbReference type="PANTHER" id="PTHR23411">
    <property type="entry name" value="TAPASIN"/>
    <property type="match status" value="1"/>
</dbReference>
<dbReference type="Pfam" id="PF07654">
    <property type="entry name" value="C1-set"/>
    <property type="match status" value="2"/>
</dbReference>
<dbReference type="Pfam" id="PF00047">
    <property type="entry name" value="ig"/>
    <property type="match status" value="1"/>
</dbReference>
<dbReference type="SMART" id="SM00407">
    <property type="entry name" value="IGc1"/>
    <property type="match status" value="3"/>
</dbReference>
<dbReference type="SUPFAM" id="SSF48726">
    <property type="entry name" value="Immunoglobulin"/>
    <property type="match status" value="3"/>
</dbReference>
<dbReference type="PROSITE" id="PS50835">
    <property type="entry name" value="IG_LIKE"/>
    <property type="match status" value="3"/>
</dbReference>
<dbReference type="PROSITE" id="PS00290">
    <property type="entry name" value="IG_MHC"/>
    <property type="match status" value="2"/>
</dbReference>
<keyword id="KW-0002">3D-structure</keyword>
<keyword id="KW-1064">Adaptive immunity</keyword>
<keyword id="KW-0025">Alternative splicing</keyword>
<keyword id="KW-1003">Cell membrane</keyword>
<keyword id="KW-0903">Direct protein sequencing</keyword>
<keyword id="KW-1015">Disulfide bond</keyword>
<keyword id="KW-0325">Glycoprotein</keyword>
<keyword id="KW-0391">Immunity</keyword>
<keyword id="KW-1280">Immunoglobulin</keyword>
<keyword id="KW-0393">Immunoglobulin domain</keyword>
<keyword id="KW-0472">Membrane</keyword>
<keyword id="KW-1267">Proteomics identification</keyword>
<keyword id="KW-1185">Reference proteome</keyword>
<keyword id="KW-0677">Repeat</keyword>
<keyword id="KW-0964">Secreted</keyword>
<keyword id="KW-0812">Transmembrane</keyword>
<keyword id="KW-1133">Transmembrane helix</keyword>
<evidence type="ECO:0000250" key="1">
    <source>
        <dbReference type="UniProtKB" id="P01876"/>
    </source>
</evidence>
<evidence type="ECO:0000255" key="2"/>
<evidence type="ECO:0000255" key="3">
    <source>
        <dbReference type="PROSITE-ProRule" id="PRU00114"/>
    </source>
</evidence>
<evidence type="ECO:0000269" key="4">
    <source>
    </source>
</evidence>
<evidence type="ECO:0000269" key="5">
    <source>
    </source>
</evidence>
<evidence type="ECO:0000269" key="6">
    <source>
    </source>
</evidence>
<evidence type="ECO:0000269" key="7">
    <source>
    </source>
</evidence>
<evidence type="ECO:0000269" key="8">
    <source>
    </source>
</evidence>
<evidence type="ECO:0000269" key="9">
    <source>
    </source>
</evidence>
<evidence type="ECO:0000269" key="10">
    <source>
    </source>
</evidence>
<evidence type="ECO:0000269" key="11">
    <source>
    </source>
</evidence>
<evidence type="ECO:0000303" key="12">
    <source>
    </source>
</evidence>
<evidence type="ECO:0000303" key="13">
    <source>
    </source>
</evidence>
<evidence type="ECO:0000303" key="14">
    <source>
    </source>
</evidence>
<evidence type="ECO:0000303" key="15">
    <source>
    </source>
</evidence>
<evidence type="ECO:0000303" key="16">
    <source>
    </source>
</evidence>
<evidence type="ECO:0000303" key="17">
    <source ref="8"/>
</evidence>
<evidence type="ECO:0000305" key="18"/>
<evidence type="ECO:0000305" key="19">
    <source>
    </source>
</evidence>
<evidence type="ECO:0000305" key="20">
    <source>
    </source>
</evidence>
<evidence type="ECO:0000305" key="21">
    <source ref="15"/>
</evidence>
<evidence type="ECO:0007829" key="22">
    <source>
        <dbReference type="PDB" id="6UE8"/>
    </source>
</evidence>
<evidence type="ECO:0007829" key="23">
    <source>
        <dbReference type="PDB" id="6UE9"/>
    </source>
</evidence>
<evidence type="ECO:0007829" key="24">
    <source>
        <dbReference type="PDB" id="6UEA"/>
    </source>
</evidence>